<dbReference type="EC" id="1.-.-.-" evidence="3"/>
<dbReference type="EMBL" id="CP003003">
    <property type="protein sequence ID" value="AEO57199.1"/>
    <property type="molecule type" value="Genomic_DNA"/>
</dbReference>
<dbReference type="RefSeq" id="XP_003662444.1">
    <property type="nucleotide sequence ID" value="XM_003662396.1"/>
</dbReference>
<dbReference type="SMR" id="G2Q9A7"/>
<dbReference type="FunCoup" id="G2Q9A7">
    <property type="interactions" value="203"/>
</dbReference>
<dbReference type="GeneID" id="11512497"/>
<dbReference type="KEGG" id="mtm:MYCTH_114666"/>
<dbReference type="VEuPathDB" id="FungiDB:MYCTH_114666"/>
<dbReference type="eggNOG" id="KOG1198">
    <property type="taxonomic scope" value="Eukaryota"/>
</dbReference>
<dbReference type="HOGENOM" id="CLU_026673_16_1_1"/>
<dbReference type="InParanoid" id="G2Q9A7"/>
<dbReference type="OMA" id="SDTKMRG"/>
<dbReference type="OrthoDB" id="48317at2759"/>
<dbReference type="Proteomes" id="UP000007322">
    <property type="component" value="Chromosome 2"/>
</dbReference>
<dbReference type="GO" id="GO:0000166">
    <property type="term" value="F:nucleotide binding"/>
    <property type="evidence" value="ECO:0007669"/>
    <property type="project" value="UniProtKB-KW"/>
</dbReference>
<dbReference type="GO" id="GO:0016651">
    <property type="term" value="F:oxidoreductase activity, acting on NAD(P)H"/>
    <property type="evidence" value="ECO:0007669"/>
    <property type="project" value="InterPro"/>
</dbReference>
<dbReference type="CDD" id="cd08249">
    <property type="entry name" value="enoyl_reductase_like"/>
    <property type="match status" value="1"/>
</dbReference>
<dbReference type="Gene3D" id="3.90.180.10">
    <property type="entry name" value="Medium-chain alcohol dehydrogenases, catalytic domain"/>
    <property type="match status" value="1"/>
</dbReference>
<dbReference type="Gene3D" id="3.40.50.720">
    <property type="entry name" value="NAD(P)-binding Rossmann-like Domain"/>
    <property type="match status" value="1"/>
</dbReference>
<dbReference type="InterPro" id="IPR013149">
    <property type="entry name" value="ADH-like_C"/>
</dbReference>
<dbReference type="InterPro" id="IPR013154">
    <property type="entry name" value="ADH-like_N"/>
</dbReference>
<dbReference type="InterPro" id="IPR011032">
    <property type="entry name" value="GroES-like_sf"/>
</dbReference>
<dbReference type="InterPro" id="IPR036291">
    <property type="entry name" value="NAD(P)-bd_dom_sf"/>
</dbReference>
<dbReference type="InterPro" id="IPR020843">
    <property type="entry name" value="PKS_ER"/>
</dbReference>
<dbReference type="InterPro" id="IPR047122">
    <property type="entry name" value="Trans-enoyl_RdTase-like"/>
</dbReference>
<dbReference type="PANTHER" id="PTHR45348">
    <property type="entry name" value="HYPOTHETICAL OXIDOREDUCTASE (EUROFUNG)"/>
    <property type="match status" value="1"/>
</dbReference>
<dbReference type="PANTHER" id="PTHR45348:SF2">
    <property type="entry name" value="ZINC-TYPE ALCOHOL DEHYDROGENASE-LIKE PROTEIN C2E1P3.01"/>
    <property type="match status" value="1"/>
</dbReference>
<dbReference type="Pfam" id="PF08240">
    <property type="entry name" value="ADH_N"/>
    <property type="match status" value="1"/>
</dbReference>
<dbReference type="Pfam" id="PF00107">
    <property type="entry name" value="ADH_zinc_N"/>
    <property type="match status" value="1"/>
</dbReference>
<dbReference type="SMART" id="SM00829">
    <property type="entry name" value="PKS_ER"/>
    <property type="match status" value="1"/>
</dbReference>
<dbReference type="SUPFAM" id="SSF50129">
    <property type="entry name" value="GroES-like"/>
    <property type="match status" value="1"/>
</dbReference>
<dbReference type="SUPFAM" id="SSF51735">
    <property type="entry name" value="NAD(P)-binding Rossmann-fold domains"/>
    <property type="match status" value="1"/>
</dbReference>
<protein>
    <recommendedName>
        <fullName evidence="4">Trans-enoyl reductase mycC</fullName>
        <ecNumber evidence="3">1.-.-.-</ecNumber>
    </recommendedName>
    <alternativeName>
        <fullName evidence="4">Myceliothermophin biosynthesis cluster protein C</fullName>
    </alternativeName>
</protein>
<evidence type="ECO:0000250" key="1">
    <source>
        <dbReference type="UniProtKB" id="Q9Y7D0"/>
    </source>
</evidence>
<evidence type="ECO:0000255" key="2"/>
<evidence type="ECO:0000269" key="3">
    <source>
    </source>
</evidence>
<evidence type="ECO:0000303" key="4">
    <source>
    </source>
</evidence>
<evidence type="ECO:0000305" key="5"/>
<reference key="1">
    <citation type="journal article" date="2011" name="Nat. Biotechnol.">
        <title>Comparative genomic analysis of the thermophilic biomass-degrading fungi Myceliophthora thermophila and Thielavia terrestris.</title>
        <authorList>
            <person name="Berka R.M."/>
            <person name="Grigoriev I.V."/>
            <person name="Otillar R."/>
            <person name="Salamov A."/>
            <person name="Grimwood J."/>
            <person name="Reid I."/>
            <person name="Ishmael N."/>
            <person name="John T."/>
            <person name="Darmond C."/>
            <person name="Moisan M.-C."/>
            <person name="Henrissat B."/>
            <person name="Coutinho P.M."/>
            <person name="Lombard V."/>
            <person name="Natvig D.O."/>
            <person name="Lindquist E."/>
            <person name="Schmutz J."/>
            <person name="Lucas S."/>
            <person name="Harris P."/>
            <person name="Powlowski J."/>
            <person name="Bellemare A."/>
            <person name="Taylor D."/>
            <person name="Butler G."/>
            <person name="de Vries R.P."/>
            <person name="Allijn I.E."/>
            <person name="van den Brink J."/>
            <person name="Ushinsky S."/>
            <person name="Storms R."/>
            <person name="Powell A.J."/>
            <person name="Paulsen I.T."/>
            <person name="Elbourne L.D.H."/>
            <person name="Baker S.E."/>
            <person name="Magnuson J."/>
            <person name="LaBoissiere S."/>
            <person name="Clutterbuck A.J."/>
            <person name="Martinez D."/>
            <person name="Wogulis M."/>
            <person name="de Leon A.L."/>
            <person name="Rey M.W."/>
            <person name="Tsang A."/>
        </authorList>
    </citation>
    <scope>NUCLEOTIDE SEQUENCE [LARGE SCALE GENOMIC DNA]</scope>
    <source>
        <strain>ATCC 42464 / BCRC 31852 / DSM 1799</strain>
    </source>
</reference>
<reference key="2">
    <citation type="journal article" date="2016" name="J. Am. Chem. Soc.">
        <title>Biochemical characterization of a eukaryotic decalin-forming Diels-Alderase.</title>
        <authorList>
            <person name="Li L."/>
            <person name="Yu P."/>
            <person name="Tang M.C."/>
            <person name="Zou Y."/>
            <person name="Gao S.S."/>
            <person name="Hung Y.S."/>
            <person name="Zhao M."/>
            <person name="Watanabe K."/>
            <person name="Houk K.N."/>
            <person name="Tang Y."/>
        </authorList>
    </citation>
    <scope>FUNCTION</scope>
    <scope>CATALYTIC ACTIVITY</scope>
    <scope>PATHWAY</scope>
</reference>
<accession>G2Q9A7</accession>
<organism>
    <name type="scientific">Thermothelomyces thermophilus (strain ATCC 42464 / BCRC 31852 / DSM 1799)</name>
    <name type="common">Sporotrichum thermophile</name>
    <dbReference type="NCBI Taxonomy" id="573729"/>
    <lineage>
        <taxon>Eukaryota</taxon>
        <taxon>Fungi</taxon>
        <taxon>Dikarya</taxon>
        <taxon>Ascomycota</taxon>
        <taxon>Pezizomycotina</taxon>
        <taxon>Sordariomycetes</taxon>
        <taxon>Sordariomycetidae</taxon>
        <taxon>Sordariales</taxon>
        <taxon>Chaetomiaceae</taxon>
        <taxon>Thermothelomyces</taxon>
    </lineage>
</organism>
<gene>
    <name evidence="4" type="primary">mycC</name>
    <name type="ORF">MYCTH_114666</name>
</gene>
<keyword id="KW-0521">NADP</keyword>
<keyword id="KW-0547">Nucleotide-binding</keyword>
<keyword id="KW-0560">Oxidoreductase</keyword>
<keyword id="KW-1185">Reference proteome</keyword>
<comment type="function">
    <text evidence="3">Trans-enoyl reductase; part of the gene cluster that mediates the biosynthesis of myceliothermophins, mycotoxins that contain a trans-fused decalin ring system connected to a conjugated 3-pyrrolin-2-one moiety and that have potential anti-tumor properties (PubMed:27960349). The polyketide synthase module (PKS) of the PKS-NRPS mycA is responsible for the synthesis of the octaketide backbone (PubMed:27960349). The downstream nonribosomal peptide synthetase (NRPS) module then amidates the carboxyl end of the octaketide with a leucine (PubMed:27960349). A reductase-like domain (R) at the C-terminus catalyzes the reductive release of the polyketide-amino acid intermediate (PubMed:27960349). Because mycA lacks a designated enoylreductase (ER) domain, the required activity is provided the enoyl reductase mycC (PubMed:27960349). Following mycA-catalyzed construction and release of aminoacyl polyketide aldehyde, Knoevenagel condensation yields the expected ketone (PubMed:27960349). This C18 keto acyclic precursor is the substrate of the Diels-Alderase mycB, that catalyzes the Diels-Alder cycloaddition to produce myceliothermophin E (PubMed:27960349). A yet unknown oxygenase involved in the production of myceliothermophin A, via substitution with a hydroxyl group at the C21, has still to be identified (PubMed:27960349).</text>
</comment>
<comment type="catalytic activity">
    <reaction evidence="3">
        <text>L-leucine + 8 malonyl-CoA + 4 S-adenosyl-L-methionine + ATP + 9 NADPH + 12 H(+) = (5S)-5-(2-methylpropyl)-3-[(2E,6R,8E,10E,12E)-6,8,10,12-tetramethyltetradeca-2,8,10,12-tetraenoyl]-2,5-dihydro-1H-pyrrol-2-one + AMP + 4 S-adenosyl-L-homocysteine + 8 CO2 + diphosphate + 9 NADP(+) + 8 CoA + 7 H2O</text>
        <dbReference type="Rhea" id="RHEA:67288"/>
        <dbReference type="ChEBI" id="CHEBI:15377"/>
        <dbReference type="ChEBI" id="CHEBI:15378"/>
        <dbReference type="ChEBI" id="CHEBI:16526"/>
        <dbReference type="ChEBI" id="CHEBI:30616"/>
        <dbReference type="ChEBI" id="CHEBI:33019"/>
        <dbReference type="ChEBI" id="CHEBI:57287"/>
        <dbReference type="ChEBI" id="CHEBI:57384"/>
        <dbReference type="ChEBI" id="CHEBI:57427"/>
        <dbReference type="ChEBI" id="CHEBI:57783"/>
        <dbReference type="ChEBI" id="CHEBI:57856"/>
        <dbReference type="ChEBI" id="CHEBI:58349"/>
        <dbReference type="ChEBI" id="CHEBI:59789"/>
        <dbReference type="ChEBI" id="CHEBI:169930"/>
        <dbReference type="ChEBI" id="CHEBI:456215"/>
    </reaction>
    <physiologicalReaction direction="left-to-right" evidence="3">
        <dbReference type="Rhea" id="RHEA:67289"/>
    </physiologicalReaction>
</comment>
<comment type="pathway">
    <text evidence="3">Mycotoxin biosynthesis.</text>
</comment>
<comment type="subunit">
    <text evidence="1">Monomer.</text>
</comment>
<comment type="similarity">
    <text evidence="5">Belongs to the zinc-containing alcohol dehydrogenase family.</text>
</comment>
<proteinExistence type="evidence at protein level"/>
<sequence length="371" mass="40045">MAIDEQIPRVQRALIQSSTPGVLQFTETREVPKLLPDQVLVRVVAVALNPCDWKMPTNFPCPGAGVGADFSGTVVRVGDDVRPGKFDVKLGDRVAGAVHASNRLKPQDGTFAEYIAVRADALWRIPDGMDFHVAAAIGLCVVGTVGLAAFHERHLNLPGSPEQPVKPRAGGQPPWVLVYGGSTASGTMAIQILKLAGFRVVTTCSPANFALVESYGADKAFDYHSPNLGESIRAYTNNSLSFVMDIIASANSLRQCYASIGRAGGHYVGFELVPDELAGIRKAVRASWVLGIRLLGYEIALDRGYGSPPDPELGMWGRAWFKRTEDLVWGGKIRPHPIELDTESGFDGIVAGVERLKRGEVSGKKLVYLIR</sequence>
<name>MYCC_THET4</name>
<feature type="chain" id="PRO_0000450501" description="Trans-enoyl reductase mycC">
    <location>
        <begin position="1"/>
        <end position="371"/>
    </location>
</feature>
<feature type="binding site" evidence="1">
    <location>
        <begin position="51"/>
        <end position="54"/>
    </location>
    <ligand>
        <name>NADP(+)</name>
        <dbReference type="ChEBI" id="CHEBI:58349"/>
    </ligand>
</feature>
<feature type="binding site" evidence="2">
    <location>
        <begin position="140"/>
        <end position="147"/>
    </location>
    <ligand>
        <name>substrate</name>
    </ligand>
</feature>
<feature type="binding site" evidence="1">
    <location>
        <begin position="182"/>
        <end position="185"/>
    </location>
    <ligand>
        <name>NADP(+)</name>
        <dbReference type="ChEBI" id="CHEBI:58349"/>
    </ligand>
</feature>
<feature type="binding site" evidence="1">
    <location>
        <begin position="205"/>
        <end position="208"/>
    </location>
    <ligand>
        <name>NADP(+)</name>
        <dbReference type="ChEBI" id="CHEBI:58349"/>
    </ligand>
</feature>
<feature type="binding site" evidence="1">
    <location>
        <position position="223"/>
    </location>
    <ligand>
        <name>NADP(+)</name>
        <dbReference type="ChEBI" id="CHEBI:58349"/>
    </ligand>
</feature>
<feature type="binding site" evidence="1">
    <location>
        <begin position="270"/>
        <end position="271"/>
    </location>
    <ligand>
        <name>NADP(+)</name>
        <dbReference type="ChEBI" id="CHEBI:58349"/>
    </ligand>
</feature>
<feature type="binding site" evidence="2">
    <location>
        <begin position="291"/>
        <end position="295"/>
    </location>
    <ligand>
        <name>substrate</name>
    </ligand>
</feature>
<feature type="binding site" evidence="1">
    <location>
        <begin position="361"/>
        <end position="362"/>
    </location>
    <ligand>
        <name>NADP(+)</name>
        <dbReference type="ChEBI" id="CHEBI:58349"/>
    </ligand>
</feature>